<name>CFTR_PLEMO</name>
<accession>Q2QLB4</accession>
<sequence>MQRSPLEKASVVSKLFFSWTRPILKKGYRQRLELSDIYQIPSADSADNLSEKLEREWDRELASKKNPKLINALRRCFFWRFMFYGILLYLGEVTKAVQPLLLGRIIASYDPDNKTERSIAIYLGIGLCLLFIVRTLLLHPAIFGLHHIGMQMRIAMFSLIYKKTLKLSSRVLDKISIGQLVSLLSNNLNKFDEGLALAHFVWIAPLQVALLMGLIWELLQASVFCGLGFLIVLALFQAGLGRMMMKYRDQRAGKINERLVITSEMIENIQSVKAYCWEEAMEKMIENLRQTELKLTRKAAYVRYFNSSAFFFSGFFVVFLSVLPYALIKGIILRKIFTTISFCIVLRMAVTRQFPWAVQTWYDSLGAINKIQDFLQKQEYKTLEYNLTTTEVVMENVTAFWEEGFGELFEKAKQSNNNRKTSNGHDNLFFSNFSLLGTPVLKDINFKIERGQLLAVAGSTGAGKTSLLMMIMGELEPSEGKIKHSGRISFCSQFSWIMPGTIKENIIFGVSYDEYRYRSVIKACQLEEDISKFAEKDNIVLGEGGITLSGGQRARISLARAVYKDADLYLLDSPFGYLDVLTEKEIFESCVCKLMANKTRILVTSKMEHLKKADKILILHEGSSYFYGTFSELQNLRPDFSSKLMGYDSFDQFSSERRNSILTETLRRFSLEGDAPVSWTETKKQSFKQTGEFGEKRKNSILNSINSIRKFSIVHKTPLQMNGIEEDSDEPSERRLSLIPDSEQGEAILPRISVINTGPALQVRRRQSVLNMMTHSVNQGQSVHRKTTASTRKVSLAPQANLTELDIYSRRLSQETGLEISEEINEEDLKECFFDDMESIPAVTTWNTYLRYITLHKSLIFVLIWCLVIFLAEVAASLVVLWLLGNTSFQDKGNSTYSRNNSYAVIITNTSSYYVFYIYVGVADTLLALGFFRGLPLVHTLITVSKILHHKMLHSVLQAPMSTLNTLKAGGILNRFSKDIAILDDLLPLTIFDFIQLLLIVIGAIAVVSVLQPYIFLATVPVIAAFILLRAYFLQTSQQLKQLESAGRSPIFTHLVTSLKGLWTLRAFGRQPYFETLFHKALNLHTANWFLYLSTLRWFQMRIEMIFVIFFIAVTFISILTTGEGEGTVGIILTLAMNIMSTLQWAVNSSIDVDSLMRSVSRVFKFIDMPTEGKPTKSTKAYKNGQLSKVMIIENSHVKKDDIWPSGGQMTIKDLTAKYIEGGNAILENISFSISPGQRVGLLGRTGSGKSTLLSAFLRLLNTEGEIQIDGVSWDSVTLQQWRKAFGVIPQKVFIFTGTFRKNLDPYEQWSDQEVWKVADEVGLRSVIEQFPGKLDFVLVDGGCVLSHGHKQLMCLARSVLSKAKILLLDEPSAHLDPVTYQIIRRALKQAFADCTVILCEHRIEAMLECQQFLVIEENKVRQYDSIQKLLNEKSLFQQAISHSDRVKLFPHRNSSKYKSRPQIASLKEETEEEVQETRL</sequence>
<keyword id="KW-0067">ATP-binding</keyword>
<keyword id="KW-1003">Cell membrane</keyword>
<keyword id="KW-0868">Chloride</keyword>
<keyword id="KW-0869">Chloride channel</keyword>
<keyword id="KW-0256">Endoplasmic reticulum</keyword>
<keyword id="KW-0967">Endosome</keyword>
<keyword id="KW-0325">Glycoprotein</keyword>
<keyword id="KW-0407">Ion channel</keyword>
<keyword id="KW-0406">Ion transport</keyword>
<keyword id="KW-0413">Isomerase</keyword>
<keyword id="KW-1017">Isopeptide bond</keyword>
<keyword id="KW-0449">Lipoprotein</keyword>
<keyword id="KW-0472">Membrane</keyword>
<keyword id="KW-0547">Nucleotide-binding</keyword>
<keyword id="KW-0539">Nucleus</keyword>
<keyword id="KW-0564">Palmitate</keyword>
<keyword id="KW-0597">Phosphoprotein</keyword>
<keyword id="KW-0677">Repeat</keyword>
<keyword id="KW-0812">Transmembrane</keyword>
<keyword id="KW-1133">Transmembrane helix</keyword>
<keyword id="KW-0813">Transport</keyword>
<keyword id="KW-0832">Ubl conjugation</keyword>
<protein>
    <recommendedName>
        <fullName evidence="1">Cystic fibrosis transmembrane conductance regulator</fullName>
        <shortName>CFTR</shortName>
    </recommendedName>
    <alternativeName>
        <fullName>ATP-binding cassette sub-family C member 7</fullName>
    </alternativeName>
    <alternativeName>
        <fullName>Channel conductance-controlling ATPase</fullName>
        <ecNumber evidence="1">5.6.1.6</ecNumber>
    </alternativeName>
    <alternativeName>
        <fullName>cAMP-dependent chloride channel</fullName>
    </alternativeName>
</protein>
<evidence type="ECO:0000250" key="1">
    <source>
        <dbReference type="UniProtKB" id="P13569"/>
    </source>
</evidence>
<evidence type="ECO:0000250" key="2">
    <source>
        <dbReference type="UniProtKB" id="P26361"/>
    </source>
</evidence>
<evidence type="ECO:0000250" key="3">
    <source>
        <dbReference type="UniProtKB" id="P34158"/>
    </source>
</evidence>
<evidence type="ECO:0000255" key="4"/>
<evidence type="ECO:0000255" key="5">
    <source>
        <dbReference type="PROSITE-ProRule" id="PRU00434"/>
    </source>
</evidence>
<evidence type="ECO:0000255" key="6">
    <source>
        <dbReference type="PROSITE-ProRule" id="PRU00441"/>
    </source>
</evidence>
<evidence type="ECO:0000256" key="7">
    <source>
        <dbReference type="SAM" id="MobiDB-lite"/>
    </source>
</evidence>
<evidence type="ECO:0000305" key="8"/>
<reference key="1">
    <citation type="submission" date="2005-11" db="EMBL/GenBank/DDBJ databases">
        <title>NISC comparative sequencing initiative.</title>
        <authorList>
            <person name="Antonellis A."/>
            <person name="Ayele K."/>
            <person name="Benjamin B."/>
            <person name="Blakesley R.W."/>
            <person name="Boakye A."/>
            <person name="Bouffard G.G."/>
            <person name="Brinkley C."/>
            <person name="Brooks S."/>
            <person name="Chu G."/>
            <person name="Coleman H."/>
            <person name="Engle J."/>
            <person name="Gestole M."/>
            <person name="Greene A."/>
            <person name="Guan X."/>
            <person name="Gupta J."/>
            <person name="Haghighi P."/>
            <person name="Han J."/>
            <person name="Hansen N."/>
            <person name="Ho S.-L."/>
            <person name="Hu P."/>
            <person name="Hunter G."/>
            <person name="Hurle B."/>
            <person name="Idol J.R."/>
            <person name="Kwong P."/>
            <person name="Laric P."/>
            <person name="Larson S."/>
            <person name="Lee-Lin S.-Q."/>
            <person name="Legaspi R."/>
            <person name="Madden M."/>
            <person name="Maduro Q.L."/>
            <person name="Maduro V.B."/>
            <person name="Margulies E.H."/>
            <person name="Masiello C."/>
            <person name="Maskeri B."/>
            <person name="McDowell J."/>
            <person name="Mojidi H.A."/>
            <person name="Mullikin J.C."/>
            <person name="Oestreicher J.S."/>
            <person name="Park M."/>
            <person name="Portnoy M.E."/>
            <person name="Prasad A."/>
            <person name="Puri O."/>
            <person name="Reddix-Dugue N."/>
            <person name="Schandler K."/>
            <person name="Schueler M.G."/>
            <person name="Sison C."/>
            <person name="Stantripop S."/>
            <person name="Stephen E."/>
            <person name="Taye A."/>
            <person name="Thomas J.W."/>
            <person name="Thomas P.J."/>
            <person name="Tsipouri V."/>
            <person name="Ung L."/>
            <person name="Vogt J.L."/>
            <person name="Wetherby K.D."/>
            <person name="Young A."/>
            <person name="Green E.D."/>
        </authorList>
    </citation>
    <scope>NUCLEOTIDE SEQUENCE [LARGE SCALE GENOMIC DNA]</scope>
</reference>
<gene>
    <name evidence="1" type="primary">CFTR</name>
    <name type="synonym">ABCC7</name>
</gene>
<feature type="chain" id="PRO_0000226369" description="Cystic fibrosis transmembrane conductance regulator">
    <location>
        <begin position="1"/>
        <end position="1480"/>
    </location>
</feature>
<feature type="topological domain" description="Cytoplasmic" evidence="1">
    <location>
        <begin position="1"/>
        <end position="77"/>
    </location>
</feature>
<feature type="transmembrane region" description="Helical; Name=1" evidence="1">
    <location>
        <begin position="78"/>
        <end position="98"/>
    </location>
</feature>
<feature type="topological domain" description="Extracellular" evidence="1">
    <location>
        <begin position="99"/>
        <end position="122"/>
    </location>
</feature>
<feature type="transmembrane region" description="Helical; Name=2" evidence="1">
    <location>
        <begin position="123"/>
        <end position="146"/>
    </location>
</feature>
<feature type="topological domain" description="Cytoplasmic" evidence="1">
    <location>
        <begin position="147"/>
        <end position="195"/>
    </location>
</feature>
<feature type="transmembrane region" description="Helical; Name=3" evidence="1">
    <location>
        <begin position="196"/>
        <end position="216"/>
    </location>
</feature>
<feature type="topological domain" description="Extracellular" evidence="1">
    <location>
        <begin position="217"/>
        <end position="222"/>
    </location>
</feature>
<feature type="transmembrane region" description="Helical; Name=4" evidence="1">
    <location>
        <begin position="223"/>
        <end position="243"/>
    </location>
</feature>
<feature type="topological domain" description="Cytoplasmic" evidence="1">
    <location>
        <begin position="244"/>
        <end position="298"/>
    </location>
</feature>
<feature type="transmembrane region" description="Helical; Name=5" evidence="1">
    <location>
        <begin position="299"/>
        <end position="319"/>
    </location>
</feature>
<feature type="topological domain" description="Extracellular" evidence="1">
    <location>
        <begin position="320"/>
        <end position="339"/>
    </location>
</feature>
<feature type="transmembrane region" description="Helical; Name=6" evidence="1">
    <location>
        <begin position="340"/>
        <end position="358"/>
    </location>
</feature>
<feature type="topological domain" description="Cytoplasmic" evidence="1">
    <location>
        <begin position="359"/>
        <end position="858"/>
    </location>
</feature>
<feature type="transmembrane region" description="Helical; Name=7" evidence="1">
    <location>
        <begin position="859"/>
        <end position="879"/>
    </location>
</feature>
<feature type="topological domain" description="Extracellular" evidence="1">
    <location>
        <begin position="880"/>
        <end position="918"/>
    </location>
</feature>
<feature type="transmembrane region" description="Discontinuously helical; Name=8" evidence="1">
    <location>
        <begin position="919"/>
        <end position="939"/>
    </location>
</feature>
<feature type="topological domain" description="Cytoplasmic" evidence="1">
    <location>
        <begin position="940"/>
        <end position="990"/>
    </location>
</feature>
<feature type="transmembrane region" description="Helical; Name=9" evidence="1">
    <location>
        <begin position="991"/>
        <end position="1011"/>
    </location>
</feature>
<feature type="topological domain" description="Extracellular" evidence="1">
    <location>
        <begin position="1012"/>
        <end position="1013"/>
    </location>
</feature>
<feature type="transmembrane region" description="Helical; Name=10" evidence="1">
    <location>
        <begin position="1014"/>
        <end position="1034"/>
    </location>
</feature>
<feature type="topological domain" description="Cytoplasmic" evidence="1">
    <location>
        <begin position="1035"/>
        <end position="1095"/>
    </location>
</feature>
<feature type="transmembrane region" description="Helical; Name=11" evidence="1">
    <location>
        <begin position="1096"/>
        <end position="1116"/>
    </location>
</feature>
<feature type="topological domain" description="Extracellular" evidence="1">
    <location>
        <begin position="1117"/>
        <end position="1130"/>
    </location>
</feature>
<feature type="transmembrane region" description="Helical; Name=12" evidence="1">
    <location>
        <begin position="1131"/>
        <end position="1151"/>
    </location>
</feature>
<feature type="topological domain" description="Cytoplasmic" evidence="1">
    <location>
        <begin position="1152"/>
        <end position="1480"/>
    </location>
</feature>
<feature type="domain" description="ABC transmembrane type-1 1" evidence="6">
    <location>
        <begin position="81"/>
        <end position="365"/>
    </location>
</feature>
<feature type="domain" description="ABC transporter 1" evidence="5">
    <location>
        <begin position="423"/>
        <end position="646"/>
    </location>
</feature>
<feature type="domain" description="ABC transmembrane type-1 2" evidence="6">
    <location>
        <begin position="859"/>
        <end position="1155"/>
    </location>
</feature>
<feature type="domain" description="ABC transporter 2" evidence="5">
    <location>
        <begin position="1210"/>
        <end position="1443"/>
    </location>
</feature>
<feature type="region of interest" description="Disordered R region" evidence="1">
    <location>
        <begin position="654"/>
        <end position="831"/>
    </location>
</feature>
<feature type="region of interest" description="Interaction with GORASP2" evidence="1">
    <location>
        <begin position="1386"/>
        <end position="1480"/>
    </location>
</feature>
<feature type="region of interest" description="Disordered" evidence="7">
    <location>
        <begin position="1452"/>
        <end position="1480"/>
    </location>
</feature>
<feature type="short sequence motif" description="PDZ-binding" evidence="1">
    <location>
        <begin position="1478"/>
        <end position="1480"/>
    </location>
</feature>
<feature type="compositionally biased region" description="Acidic residues" evidence="7">
    <location>
        <begin position="1470"/>
        <end position="1480"/>
    </location>
</feature>
<feature type="binding site" evidence="1">
    <location>
        <position position="401"/>
    </location>
    <ligand>
        <name>ATP</name>
        <dbReference type="ChEBI" id="CHEBI:30616"/>
        <label>1</label>
    </ligand>
</feature>
<feature type="binding site" evidence="1">
    <location>
        <position position="434"/>
    </location>
    <ligand>
        <name>ATP</name>
        <dbReference type="ChEBI" id="CHEBI:30616"/>
        <label>1</label>
    </ligand>
</feature>
<feature type="binding site" evidence="5">
    <location>
        <begin position="458"/>
        <end position="465"/>
    </location>
    <ligand>
        <name>ATP</name>
        <dbReference type="ChEBI" id="CHEBI:30616"/>
        <label>1</label>
    </ligand>
</feature>
<feature type="binding site" evidence="2">
    <location>
        <position position="493"/>
    </location>
    <ligand>
        <name>ATP</name>
        <dbReference type="ChEBI" id="CHEBI:30616"/>
        <label>1</label>
    </ligand>
</feature>
<feature type="binding site" evidence="1">
    <location>
        <position position="1219"/>
    </location>
    <ligand>
        <name>ATP</name>
        <dbReference type="ChEBI" id="CHEBI:30616"/>
        <label>2</label>
    </ligand>
</feature>
<feature type="binding site" evidence="5">
    <location>
        <begin position="1244"/>
        <end position="1251"/>
    </location>
    <ligand>
        <name>ATP</name>
        <dbReference type="ChEBI" id="CHEBI:30616"/>
        <label>2</label>
    </ligand>
</feature>
<feature type="modified residue" description="Phosphoserine" evidence="1">
    <location>
        <position position="549"/>
    </location>
</feature>
<feature type="modified residue" description="Phosphoserine" evidence="1">
    <location>
        <position position="660"/>
    </location>
</feature>
<feature type="modified residue" description="Phosphoserine; by PKA" evidence="1">
    <location>
        <position position="670"/>
    </location>
</feature>
<feature type="modified residue" description="Phosphoserine" evidence="1">
    <location>
        <position position="686"/>
    </location>
</feature>
<feature type="modified residue" description="Phosphoserine" evidence="1">
    <location>
        <position position="700"/>
    </location>
</feature>
<feature type="modified residue" description="Phosphoserine" evidence="1">
    <location>
        <position position="712"/>
    </location>
</feature>
<feature type="modified residue" description="Phosphothreonine" evidence="1">
    <location>
        <position position="717"/>
    </location>
</feature>
<feature type="modified residue" description="Phosphoserine" evidence="1">
    <location>
        <position position="737"/>
    </location>
</feature>
<feature type="modified residue" description="Phosphoserine" evidence="1">
    <location>
        <position position="753"/>
    </location>
</feature>
<feature type="modified residue" description="Phosphoserine" evidence="1">
    <location>
        <position position="768"/>
    </location>
</feature>
<feature type="modified residue" description="Phosphoserine" evidence="1">
    <location>
        <position position="790"/>
    </location>
</feature>
<feature type="modified residue" description="Phosphoserine" evidence="1">
    <location>
        <position position="795"/>
    </location>
</feature>
<feature type="modified residue" description="Phosphoserine" evidence="1">
    <location>
        <position position="813"/>
    </location>
</feature>
<feature type="modified residue" description="Phosphoserine" evidence="1">
    <location>
        <position position="1444"/>
    </location>
</feature>
<feature type="modified residue" description="Phosphoserine" evidence="1">
    <location>
        <position position="1456"/>
    </location>
</feature>
<feature type="lipid moiety-binding region" description="S-palmitoyl cysteine" evidence="1">
    <location>
        <position position="524"/>
    </location>
</feature>
<feature type="lipid moiety-binding region" description="S-palmitoyl cysteine" evidence="1">
    <location>
        <position position="1395"/>
    </location>
</feature>
<feature type="glycosylation site" description="N-linked (GlcNAc...) asparagine" evidence="4">
    <location>
        <position position="894"/>
    </location>
</feature>
<feature type="glycosylation site" description="N-linked (GlcNAc...) asparagine" evidence="4">
    <location>
        <position position="900"/>
    </location>
</feature>
<feature type="glycosylation site" description="N-linked (GlcNAc...) asparagine" evidence="4">
    <location>
        <position position="909"/>
    </location>
</feature>
<feature type="cross-link" description="Glycyl lysine isopeptide (Lys-Gly) (interchain with G-Cter in ubiquitin)" evidence="1">
    <location>
        <position position="688"/>
    </location>
</feature>
<proteinExistence type="inferred from homology"/>
<comment type="function">
    <text evidence="1 2">Epithelial ion channel that plays an important role in the regulation of epithelial ion and water transport and fluid homeostasis. Mediates the transport of chloride ions across the cell membrane (By similarity). Possesses an intrinsic ATPase activity and utilizes ATP to gate its channel; the passive flow of anions through the channel is gated by cycles of ATP binding and hydrolysis by the ATP-binding domains (By similarity). The ion channel is also permeable to HCO(3)(-); selectivity depends on the extracellular chloride concentration. Exerts its function also by modulating the activity of other ion channels and transporters. Contributes to the regulation of the pH and the ion content of the epithelial fluid layer. Modulates the activity of the epithelial sodium channel (ENaC) complex, in part by regulating the cell surface expression of the ENaC complex. May regulate bicarbonate secretion and salvage in epithelial cells by regulating the transporter SLC4A7. Can inhibit the chloride channel activity of ANO1 (By similarity). Plays a role in the chloride and bicarbonate homeostasis during sperm epididymal maturation and capacitation (By similarity).</text>
</comment>
<comment type="catalytic activity">
    <reaction evidence="1">
        <text>ATP + H2O + closed Cl(-) channel = ADP + phosphate + open Cl(-) channel.</text>
        <dbReference type="EC" id="5.6.1.6"/>
    </reaction>
</comment>
<comment type="catalytic activity">
    <reaction evidence="1">
        <text>chloride(in) = chloride(out)</text>
        <dbReference type="Rhea" id="RHEA:29823"/>
        <dbReference type="ChEBI" id="CHEBI:17996"/>
    </reaction>
</comment>
<comment type="catalytic activity">
    <reaction evidence="1">
        <text>hydrogencarbonate(in) = hydrogencarbonate(out)</text>
        <dbReference type="Rhea" id="RHEA:28695"/>
        <dbReference type="ChEBI" id="CHEBI:17544"/>
    </reaction>
</comment>
<comment type="catalytic activity">
    <reaction evidence="1">
        <text>ATP + H2O = ADP + phosphate + H(+)</text>
        <dbReference type="Rhea" id="RHEA:13065"/>
        <dbReference type="ChEBI" id="CHEBI:15377"/>
        <dbReference type="ChEBI" id="CHEBI:15378"/>
        <dbReference type="ChEBI" id="CHEBI:30616"/>
        <dbReference type="ChEBI" id="CHEBI:43474"/>
        <dbReference type="ChEBI" id="CHEBI:456216"/>
    </reaction>
    <physiologicalReaction direction="left-to-right" evidence="1">
        <dbReference type="Rhea" id="RHEA:13066"/>
    </physiologicalReaction>
</comment>
<comment type="subunit">
    <text evidence="1 2 3">Monomer; does not require oligomerization for channel activity. May form oligomers in the membrane (By similarity). Interacts with SLC26A3, SLC26A6 and NHERF1 (By similarity). Interacts with SHANK2 (By similarity). Interacts with MYO6 (By similarity). Interacts (via C-terminus) with GOPC (via PDZ domain); this promotes CFTR internalization and thereby decreases channel activity. Interacts with SLC4A7 through NHERF1. Found in a complex with MYO5B and RAB11A. Interacts with ANO1. Interacts with SLC26A8 (By similarity). Interacts with AHCYL1; the interaction increases CFTR activity (By similarity). Interacts with CSE1L (By similarity). The core-glycosylated form interacts with GORASP2 (via PDZ GRASP-type 1 domain) in respone to ER stress (By similarity). Interacts with MARCHF2; the interaction leads to CFTR ubiqtuitination and degradation (By similarity). Interacts with ADGRG2 (By similarity).</text>
</comment>
<comment type="subcellular location">
    <subcellularLocation>
        <location evidence="2">Apical cell membrane</location>
        <topology evidence="1">Multi-pass membrane protein</topology>
    </subcellularLocation>
    <subcellularLocation>
        <location evidence="1">Early endosome membrane</location>
        <topology evidence="1">Multi-pass membrane protein</topology>
    </subcellularLocation>
    <subcellularLocation>
        <location evidence="2">Cell membrane</location>
        <topology evidence="1">Multi-pass membrane protein</topology>
    </subcellularLocation>
    <subcellularLocation>
        <location evidence="1">Recycling endosome membrane</location>
        <topology evidence="1">Multi-pass membrane protein</topology>
    </subcellularLocation>
    <subcellularLocation>
        <location evidence="1">Endoplasmic reticulum membrane</location>
        <topology evidence="1">Multi-pass membrane protein</topology>
    </subcellularLocation>
    <subcellularLocation>
        <location evidence="3">Nucleus</location>
    </subcellularLocation>
    <text evidence="1 3">The channel is internalized from the cell surface into an endosomal recycling compartment, from where it is recycled to the cell membrane. In the oviduct and bronchus, detected on the apical side of epithelial cells, but not associated with cilia. In Sertoli cells, a processed product is detected in the nucleus. ER stress induces GORASP2-mediated unconventional (ER/Golgi-independent) trafficking of core-glycosylated CFTR to cell membrane.</text>
</comment>
<comment type="domain">
    <text evidence="1 2">Binds and hydrolyzes ATP via the two cytoplasmic ABC transporter nucleotide-binding domains. The two ATP-binding domains interact with each other, forming a head-to-tail dimer. Normal ATPase activity requires interaction between the two domains. The first ABC transporter nucleotide-binding domain has no ATPase activity by itself.</text>
</comment>
<comment type="domain">
    <text evidence="1">The PDZ-binding motif mediates interactions with GOPC and with the SLC4A7, NHERF1/EBP50 complex.</text>
</comment>
<comment type="domain">
    <text evidence="1">The disordered R region mediates channel activation when it is phosphorylated, but not in the absence of phosphorylation.</text>
</comment>
<comment type="PTM">
    <text evidence="1">N-glycosylated.</text>
</comment>
<comment type="PTM">
    <text evidence="1">Phosphorylated; cAMP treatment promotes phosphorylation and activates the channel. Dephosphorylation decreases the ATPase activity (in vitro). Phosphorylation at PKA sites activates the channel. Phosphorylation at PKC sites enhances the response to phosphorylation by PKA. Phosphorylated by AMPK; this inhibits channel activity.</text>
</comment>
<comment type="PTM">
    <text evidence="1">Ubiquitinated, leading to its degradation in the lysosome. Deubiquitination by USP10 in early endosomes enhances its endocytic recycling to the cell membrane. Ubiquitinated by RNF185 during ER stress. Ubiquitinated by MARCHF2 (By similarity).</text>
</comment>
<comment type="similarity">
    <text evidence="8">Belongs to the ABC transporter superfamily. ABCC family. CFTR transporter (TC 3.A.1.202) subfamily.</text>
</comment>
<dbReference type="EC" id="5.6.1.6" evidence="1"/>
<dbReference type="EMBL" id="DP000019">
    <property type="protein sequence ID" value="ABB89795.1"/>
    <property type="molecule type" value="Genomic_DNA"/>
</dbReference>
<dbReference type="SMR" id="Q2QLB4"/>
<dbReference type="GlyCosmos" id="Q2QLB4">
    <property type="glycosylation" value="3 sites, No reported glycans"/>
</dbReference>
<dbReference type="GO" id="GO:0016324">
    <property type="term" value="C:apical plasma membrane"/>
    <property type="evidence" value="ECO:0000250"/>
    <property type="project" value="UniProtKB"/>
</dbReference>
<dbReference type="GO" id="GO:0034707">
    <property type="term" value="C:chloride channel complex"/>
    <property type="evidence" value="ECO:0007669"/>
    <property type="project" value="UniProtKB-KW"/>
</dbReference>
<dbReference type="GO" id="GO:0005829">
    <property type="term" value="C:cytosol"/>
    <property type="evidence" value="ECO:0007669"/>
    <property type="project" value="TreeGrafter"/>
</dbReference>
<dbReference type="GO" id="GO:0005769">
    <property type="term" value="C:early endosome"/>
    <property type="evidence" value="ECO:0000250"/>
    <property type="project" value="UniProtKB"/>
</dbReference>
<dbReference type="GO" id="GO:0031901">
    <property type="term" value="C:early endosome membrane"/>
    <property type="evidence" value="ECO:0007669"/>
    <property type="project" value="UniProtKB-SubCell"/>
</dbReference>
<dbReference type="GO" id="GO:0005789">
    <property type="term" value="C:endoplasmic reticulum membrane"/>
    <property type="evidence" value="ECO:0000250"/>
    <property type="project" value="UniProtKB"/>
</dbReference>
<dbReference type="GO" id="GO:0016020">
    <property type="term" value="C:membrane"/>
    <property type="evidence" value="ECO:0000250"/>
    <property type="project" value="UniProtKB"/>
</dbReference>
<dbReference type="GO" id="GO:0005634">
    <property type="term" value="C:nucleus"/>
    <property type="evidence" value="ECO:0000250"/>
    <property type="project" value="UniProtKB"/>
</dbReference>
<dbReference type="GO" id="GO:0005886">
    <property type="term" value="C:plasma membrane"/>
    <property type="evidence" value="ECO:0000250"/>
    <property type="project" value="UniProtKB"/>
</dbReference>
<dbReference type="GO" id="GO:0055038">
    <property type="term" value="C:recycling endosome membrane"/>
    <property type="evidence" value="ECO:0007669"/>
    <property type="project" value="UniProtKB-SubCell"/>
</dbReference>
<dbReference type="GO" id="GO:0140359">
    <property type="term" value="F:ABC-type transporter activity"/>
    <property type="evidence" value="ECO:0007669"/>
    <property type="project" value="InterPro"/>
</dbReference>
<dbReference type="GO" id="GO:0005524">
    <property type="term" value="F:ATP binding"/>
    <property type="evidence" value="ECO:0007669"/>
    <property type="project" value="UniProtKB-KW"/>
</dbReference>
<dbReference type="GO" id="GO:0016887">
    <property type="term" value="F:ATP hydrolysis activity"/>
    <property type="evidence" value="ECO:0000250"/>
    <property type="project" value="UniProtKB"/>
</dbReference>
<dbReference type="GO" id="GO:0015106">
    <property type="term" value="F:bicarbonate transmembrane transporter activity"/>
    <property type="evidence" value="ECO:0000250"/>
    <property type="project" value="UniProtKB"/>
</dbReference>
<dbReference type="GO" id="GO:0005254">
    <property type="term" value="F:chloride channel activity"/>
    <property type="evidence" value="ECO:0000250"/>
    <property type="project" value="UniProtKB"/>
</dbReference>
<dbReference type="GO" id="GO:0019869">
    <property type="term" value="F:chloride channel inhibitor activity"/>
    <property type="evidence" value="ECO:0000250"/>
    <property type="project" value="UniProtKB"/>
</dbReference>
<dbReference type="GO" id="GO:0015108">
    <property type="term" value="F:chloride transmembrane transporter activity"/>
    <property type="evidence" value="ECO:0000250"/>
    <property type="project" value="UniProtKB"/>
</dbReference>
<dbReference type="GO" id="GO:0005260">
    <property type="term" value="F:intracellularly ATP-gated chloride channel activity"/>
    <property type="evidence" value="ECO:0000250"/>
    <property type="project" value="UniProtKB"/>
</dbReference>
<dbReference type="GO" id="GO:0015701">
    <property type="term" value="P:bicarbonate transport"/>
    <property type="evidence" value="ECO:0000250"/>
    <property type="project" value="UniProtKB"/>
</dbReference>
<dbReference type="GO" id="GO:0071320">
    <property type="term" value="P:cellular response to cAMP"/>
    <property type="evidence" value="ECO:0000250"/>
    <property type="project" value="UniProtKB"/>
</dbReference>
<dbReference type="GO" id="GO:1904322">
    <property type="term" value="P:cellular response to forskolin"/>
    <property type="evidence" value="ECO:0000250"/>
    <property type="project" value="UniProtKB"/>
</dbReference>
<dbReference type="GO" id="GO:1902476">
    <property type="term" value="P:chloride transmembrane transport"/>
    <property type="evidence" value="ECO:0000250"/>
    <property type="project" value="UniProtKB"/>
</dbReference>
<dbReference type="GO" id="GO:0051454">
    <property type="term" value="P:intracellular pH elevation"/>
    <property type="evidence" value="ECO:0000250"/>
    <property type="project" value="UniProtKB"/>
</dbReference>
<dbReference type="GO" id="GO:0060081">
    <property type="term" value="P:membrane hyperpolarization"/>
    <property type="evidence" value="ECO:0000250"/>
    <property type="project" value="UniProtKB"/>
</dbReference>
<dbReference type="GO" id="GO:0050891">
    <property type="term" value="P:multicellular organismal-level water homeostasis"/>
    <property type="evidence" value="ECO:0000250"/>
    <property type="project" value="UniProtKB"/>
</dbReference>
<dbReference type="GO" id="GO:0034976">
    <property type="term" value="P:response to endoplasmic reticulum stress"/>
    <property type="evidence" value="ECO:0000250"/>
    <property type="project" value="UniProtKB"/>
</dbReference>
<dbReference type="GO" id="GO:0048240">
    <property type="term" value="P:sperm capacitation"/>
    <property type="evidence" value="ECO:0000250"/>
    <property type="project" value="UniProtKB"/>
</dbReference>
<dbReference type="GO" id="GO:0035377">
    <property type="term" value="P:transepithelial water transport"/>
    <property type="evidence" value="ECO:0000250"/>
    <property type="project" value="UniProtKB"/>
</dbReference>
<dbReference type="CDD" id="cd18594">
    <property type="entry name" value="ABC_6TM_CFTR_D1"/>
    <property type="match status" value="1"/>
</dbReference>
<dbReference type="CDD" id="cd18600">
    <property type="entry name" value="ABC_6TM_CFTR_D2"/>
    <property type="match status" value="1"/>
</dbReference>
<dbReference type="CDD" id="cd03291">
    <property type="entry name" value="ABCC_CFTR1"/>
    <property type="match status" value="1"/>
</dbReference>
<dbReference type="CDD" id="cd03289">
    <property type="entry name" value="ABCC_CFTR2"/>
    <property type="match status" value="1"/>
</dbReference>
<dbReference type="FunFam" id="1.20.1560.10:FF:000017">
    <property type="entry name" value="Cystic fibrosis transmembrane conductance regulator"/>
    <property type="match status" value="1"/>
</dbReference>
<dbReference type="FunFam" id="1.20.1560.10:FF:000019">
    <property type="entry name" value="Cystic fibrosis transmembrane conductance regulator"/>
    <property type="match status" value="1"/>
</dbReference>
<dbReference type="FunFam" id="3.40.50.300:FF:000581">
    <property type="entry name" value="Cystic fibrosis transmembrane conductance regulator"/>
    <property type="match status" value="1"/>
</dbReference>
<dbReference type="FunFam" id="3.40.50.300:FF:000591">
    <property type="entry name" value="Cystic fibrosis transmembrane conductance regulator"/>
    <property type="match status" value="1"/>
</dbReference>
<dbReference type="Gene3D" id="1.20.1560.10">
    <property type="entry name" value="ABC transporter type 1, transmembrane domain"/>
    <property type="match status" value="2"/>
</dbReference>
<dbReference type="Gene3D" id="3.40.50.300">
    <property type="entry name" value="P-loop containing nucleotide triphosphate hydrolases"/>
    <property type="match status" value="2"/>
</dbReference>
<dbReference type="InterPro" id="IPR003593">
    <property type="entry name" value="AAA+_ATPase"/>
</dbReference>
<dbReference type="InterPro" id="IPR011527">
    <property type="entry name" value="ABC1_TM_dom"/>
</dbReference>
<dbReference type="InterPro" id="IPR036640">
    <property type="entry name" value="ABC1_TM_sf"/>
</dbReference>
<dbReference type="InterPro" id="IPR003439">
    <property type="entry name" value="ABC_transporter-like_ATP-bd"/>
</dbReference>
<dbReference type="InterPro" id="IPR017871">
    <property type="entry name" value="ABC_transporter-like_CS"/>
</dbReference>
<dbReference type="InterPro" id="IPR050173">
    <property type="entry name" value="ABC_transporter_C-like"/>
</dbReference>
<dbReference type="InterPro" id="IPR009147">
    <property type="entry name" value="CFTR/ABCC7"/>
</dbReference>
<dbReference type="InterPro" id="IPR047082">
    <property type="entry name" value="CFTR1_ATP-bd_dom1"/>
</dbReference>
<dbReference type="InterPro" id="IPR025837">
    <property type="entry name" value="CFTR_reg_dom"/>
</dbReference>
<dbReference type="InterPro" id="IPR027417">
    <property type="entry name" value="P-loop_NTPase"/>
</dbReference>
<dbReference type="NCBIfam" id="TIGR01271">
    <property type="entry name" value="CFTR_protein"/>
    <property type="match status" value="1"/>
</dbReference>
<dbReference type="PANTHER" id="PTHR24223">
    <property type="entry name" value="ATP-BINDING CASSETTE SUB-FAMILY C"/>
    <property type="match status" value="1"/>
</dbReference>
<dbReference type="PANTHER" id="PTHR24223:SF19">
    <property type="entry name" value="CYSTIC FIBROSIS TRANSMEMBRANE CONDUCTANCE REGULATOR"/>
    <property type="match status" value="1"/>
</dbReference>
<dbReference type="Pfam" id="PF00664">
    <property type="entry name" value="ABC_membrane"/>
    <property type="match status" value="2"/>
</dbReference>
<dbReference type="Pfam" id="PF00005">
    <property type="entry name" value="ABC_tran"/>
    <property type="match status" value="2"/>
</dbReference>
<dbReference type="Pfam" id="PF14396">
    <property type="entry name" value="CFTR_R"/>
    <property type="match status" value="1"/>
</dbReference>
<dbReference type="PRINTS" id="PR01851">
    <property type="entry name" value="CYSFIBREGLTR"/>
</dbReference>
<dbReference type="SMART" id="SM00382">
    <property type="entry name" value="AAA"/>
    <property type="match status" value="2"/>
</dbReference>
<dbReference type="SUPFAM" id="SSF90123">
    <property type="entry name" value="ABC transporter transmembrane region"/>
    <property type="match status" value="2"/>
</dbReference>
<dbReference type="SUPFAM" id="SSF52540">
    <property type="entry name" value="P-loop containing nucleoside triphosphate hydrolases"/>
    <property type="match status" value="2"/>
</dbReference>
<dbReference type="PROSITE" id="PS50929">
    <property type="entry name" value="ABC_TM1F"/>
    <property type="match status" value="2"/>
</dbReference>
<dbReference type="PROSITE" id="PS00211">
    <property type="entry name" value="ABC_TRANSPORTER_1"/>
    <property type="match status" value="1"/>
</dbReference>
<dbReference type="PROSITE" id="PS50893">
    <property type="entry name" value="ABC_TRANSPORTER_2"/>
    <property type="match status" value="2"/>
</dbReference>
<organism>
    <name type="scientific">Plecturocebus moloch</name>
    <name type="common">Dusky titi monkey</name>
    <name type="synonym">Callicebus moloch</name>
    <dbReference type="NCBI Taxonomy" id="9523"/>
    <lineage>
        <taxon>Eukaryota</taxon>
        <taxon>Metazoa</taxon>
        <taxon>Chordata</taxon>
        <taxon>Craniata</taxon>
        <taxon>Vertebrata</taxon>
        <taxon>Euteleostomi</taxon>
        <taxon>Mammalia</taxon>
        <taxon>Eutheria</taxon>
        <taxon>Euarchontoglires</taxon>
        <taxon>Primates</taxon>
        <taxon>Haplorrhini</taxon>
        <taxon>Platyrrhini</taxon>
        <taxon>Pitheciidae</taxon>
        <taxon>Callicebinae</taxon>
        <taxon>Plecturocebus</taxon>
    </lineage>
</organism>